<dbReference type="EC" id="1.1.1.85" evidence="1"/>
<dbReference type="EMBL" id="CP000084">
    <property type="protein sequence ID" value="AAZ21072.1"/>
    <property type="molecule type" value="Genomic_DNA"/>
</dbReference>
<dbReference type="RefSeq" id="WP_006997659.1">
    <property type="nucleotide sequence ID" value="NC_007205.1"/>
</dbReference>
<dbReference type="SMR" id="Q4FP17"/>
<dbReference type="STRING" id="335992.SAR11_0250"/>
<dbReference type="GeneID" id="66294748"/>
<dbReference type="KEGG" id="pub:SAR11_0250"/>
<dbReference type="eggNOG" id="COG0473">
    <property type="taxonomic scope" value="Bacteria"/>
</dbReference>
<dbReference type="HOGENOM" id="CLU_031953_0_3_5"/>
<dbReference type="OrthoDB" id="9767905at2"/>
<dbReference type="UniPathway" id="UPA00048">
    <property type="reaction ID" value="UER00072"/>
</dbReference>
<dbReference type="Proteomes" id="UP000002528">
    <property type="component" value="Chromosome"/>
</dbReference>
<dbReference type="GO" id="GO:0005829">
    <property type="term" value="C:cytosol"/>
    <property type="evidence" value="ECO:0007669"/>
    <property type="project" value="TreeGrafter"/>
</dbReference>
<dbReference type="GO" id="GO:0003862">
    <property type="term" value="F:3-isopropylmalate dehydrogenase activity"/>
    <property type="evidence" value="ECO:0007669"/>
    <property type="project" value="UniProtKB-UniRule"/>
</dbReference>
<dbReference type="GO" id="GO:0000287">
    <property type="term" value="F:magnesium ion binding"/>
    <property type="evidence" value="ECO:0007669"/>
    <property type="project" value="InterPro"/>
</dbReference>
<dbReference type="GO" id="GO:0051287">
    <property type="term" value="F:NAD binding"/>
    <property type="evidence" value="ECO:0007669"/>
    <property type="project" value="InterPro"/>
</dbReference>
<dbReference type="GO" id="GO:0009098">
    <property type="term" value="P:L-leucine biosynthetic process"/>
    <property type="evidence" value="ECO:0007669"/>
    <property type="project" value="UniProtKB-UniRule"/>
</dbReference>
<dbReference type="FunFam" id="3.40.718.10:FF:000006">
    <property type="entry name" value="3-isopropylmalate dehydrogenase"/>
    <property type="match status" value="1"/>
</dbReference>
<dbReference type="Gene3D" id="3.40.718.10">
    <property type="entry name" value="Isopropylmalate Dehydrogenase"/>
    <property type="match status" value="1"/>
</dbReference>
<dbReference type="HAMAP" id="MF_01033">
    <property type="entry name" value="LeuB_type1"/>
    <property type="match status" value="1"/>
</dbReference>
<dbReference type="InterPro" id="IPR019818">
    <property type="entry name" value="IsoCit/isopropylmalate_DH_CS"/>
</dbReference>
<dbReference type="InterPro" id="IPR024084">
    <property type="entry name" value="IsoPropMal-DH-like_dom"/>
</dbReference>
<dbReference type="InterPro" id="IPR004429">
    <property type="entry name" value="Isopropylmalate_DH"/>
</dbReference>
<dbReference type="NCBIfam" id="TIGR00169">
    <property type="entry name" value="leuB"/>
    <property type="match status" value="1"/>
</dbReference>
<dbReference type="PANTHER" id="PTHR42979">
    <property type="entry name" value="3-ISOPROPYLMALATE DEHYDROGENASE"/>
    <property type="match status" value="1"/>
</dbReference>
<dbReference type="PANTHER" id="PTHR42979:SF1">
    <property type="entry name" value="3-ISOPROPYLMALATE DEHYDROGENASE"/>
    <property type="match status" value="1"/>
</dbReference>
<dbReference type="Pfam" id="PF00180">
    <property type="entry name" value="Iso_dh"/>
    <property type="match status" value="1"/>
</dbReference>
<dbReference type="SMART" id="SM01329">
    <property type="entry name" value="Iso_dh"/>
    <property type="match status" value="1"/>
</dbReference>
<dbReference type="SUPFAM" id="SSF53659">
    <property type="entry name" value="Isocitrate/Isopropylmalate dehydrogenase-like"/>
    <property type="match status" value="1"/>
</dbReference>
<dbReference type="PROSITE" id="PS00470">
    <property type="entry name" value="IDH_IMDH"/>
    <property type="match status" value="1"/>
</dbReference>
<organism>
    <name type="scientific">Pelagibacter ubique (strain HTCC1062)</name>
    <dbReference type="NCBI Taxonomy" id="335992"/>
    <lineage>
        <taxon>Bacteria</taxon>
        <taxon>Pseudomonadati</taxon>
        <taxon>Pseudomonadota</taxon>
        <taxon>Alphaproteobacteria</taxon>
        <taxon>Candidatus Pelagibacterales</taxon>
        <taxon>Candidatus Pelagibacteraceae</taxon>
        <taxon>Candidatus Pelagibacter</taxon>
    </lineage>
</organism>
<accession>Q4FP17</accession>
<keyword id="KW-0028">Amino-acid biosynthesis</keyword>
<keyword id="KW-0100">Branched-chain amino acid biosynthesis</keyword>
<keyword id="KW-0963">Cytoplasm</keyword>
<keyword id="KW-0432">Leucine biosynthesis</keyword>
<keyword id="KW-0460">Magnesium</keyword>
<keyword id="KW-0464">Manganese</keyword>
<keyword id="KW-0479">Metal-binding</keyword>
<keyword id="KW-0520">NAD</keyword>
<keyword id="KW-0560">Oxidoreductase</keyword>
<keyword id="KW-1185">Reference proteome</keyword>
<reference key="1">
    <citation type="journal article" date="2005" name="Science">
        <title>Genome streamlining in a cosmopolitan oceanic bacterium.</title>
        <authorList>
            <person name="Giovannoni S.J."/>
            <person name="Tripp H.J."/>
            <person name="Givan S."/>
            <person name="Podar M."/>
            <person name="Vergin K.L."/>
            <person name="Baptista D."/>
            <person name="Bibbs L."/>
            <person name="Eads J."/>
            <person name="Richardson T.H."/>
            <person name="Noordewier M."/>
            <person name="Rappe M.S."/>
            <person name="Short J.M."/>
            <person name="Carrington J.C."/>
            <person name="Mathur E.J."/>
        </authorList>
    </citation>
    <scope>NUCLEOTIDE SEQUENCE [LARGE SCALE GENOMIC DNA]</scope>
    <source>
        <strain>HTCC1062</strain>
    </source>
</reference>
<sequence length="368" mass="40644">MIKIKKRKILLLPGDGIGPEVIQEVKKVILWLNSNKSLDFEIDEDLAGGCSYDKHGTPITDEVFYKALESEFVMLGAVGGPKWDNLEFSKKPERALLKLRKELKLFANLRPAICFEQLVDASTLKPEIVSGLDIMIVRELTGGIYFGEPRGIKPIENGERKGINTHSYTTSEIVRVAKVAFDLARKRSNRVTSCEKSNVMEAGQLWKEEVQELHDKEYKDVELSHMLADNCAMQLLKNPKQFDVIVTDNLFGDMLSDQASMLTGSLGLLPSASLGAKNKDGEMRAMYEPIHGSAPDIAGKEIANPIASILSFAMALRYSLDLDSEADALEKAVQDVLNDGLRTKDILSQGKKEVSTSAMGDAIISKLQ</sequence>
<name>LEU3_PELUB</name>
<proteinExistence type="inferred from homology"/>
<evidence type="ECO:0000255" key="1">
    <source>
        <dbReference type="HAMAP-Rule" id="MF_01033"/>
    </source>
</evidence>
<protein>
    <recommendedName>
        <fullName evidence="1">3-isopropylmalate dehydrogenase</fullName>
        <ecNumber evidence="1">1.1.1.85</ecNumber>
    </recommendedName>
    <alternativeName>
        <fullName evidence="1">3-IPM-DH</fullName>
    </alternativeName>
    <alternativeName>
        <fullName evidence="1">Beta-IPM dehydrogenase</fullName>
        <shortName evidence="1">IMDH</shortName>
    </alternativeName>
</protein>
<comment type="function">
    <text evidence="1">Catalyzes the oxidation of 3-carboxy-2-hydroxy-4-methylpentanoate (3-isopropylmalate) to 3-carboxy-4-methyl-2-oxopentanoate. The product decarboxylates to 4-methyl-2 oxopentanoate.</text>
</comment>
<comment type="catalytic activity">
    <reaction evidence="1">
        <text>(2R,3S)-3-isopropylmalate + NAD(+) = 4-methyl-2-oxopentanoate + CO2 + NADH</text>
        <dbReference type="Rhea" id="RHEA:32271"/>
        <dbReference type="ChEBI" id="CHEBI:16526"/>
        <dbReference type="ChEBI" id="CHEBI:17865"/>
        <dbReference type="ChEBI" id="CHEBI:35121"/>
        <dbReference type="ChEBI" id="CHEBI:57540"/>
        <dbReference type="ChEBI" id="CHEBI:57945"/>
        <dbReference type="EC" id="1.1.1.85"/>
    </reaction>
</comment>
<comment type="cofactor">
    <cofactor evidence="1">
        <name>Mg(2+)</name>
        <dbReference type="ChEBI" id="CHEBI:18420"/>
    </cofactor>
    <cofactor evidence="1">
        <name>Mn(2+)</name>
        <dbReference type="ChEBI" id="CHEBI:29035"/>
    </cofactor>
    <text evidence="1">Binds 1 Mg(2+) or Mn(2+) ion per subunit.</text>
</comment>
<comment type="pathway">
    <text evidence="1">Amino-acid biosynthesis; L-leucine biosynthesis; L-leucine from 3-methyl-2-oxobutanoate: step 3/4.</text>
</comment>
<comment type="subunit">
    <text evidence="1">Homodimer.</text>
</comment>
<comment type="subcellular location">
    <subcellularLocation>
        <location evidence="1">Cytoplasm</location>
    </subcellularLocation>
</comment>
<comment type="similarity">
    <text evidence="1">Belongs to the isocitrate and isopropylmalate dehydrogenases family. LeuB type 1 subfamily.</text>
</comment>
<feature type="chain" id="PRO_0000083718" description="3-isopropylmalate dehydrogenase">
    <location>
        <begin position="1"/>
        <end position="368"/>
    </location>
</feature>
<feature type="binding site" evidence="1">
    <location>
        <begin position="80"/>
        <end position="93"/>
    </location>
    <ligand>
        <name>NAD(+)</name>
        <dbReference type="ChEBI" id="CHEBI:57540"/>
    </ligand>
</feature>
<feature type="binding site" evidence="1">
    <location>
        <position position="100"/>
    </location>
    <ligand>
        <name>substrate</name>
    </ligand>
</feature>
<feature type="binding site" evidence="1">
    <location>
        <position position="110"/>
    </location>
    <ligand>
        <name>substrate</name>
    </ligand>
</feature>
<feature type="binding site" evidence="1">
    <location>
        <position position="138"/>
    </location>
    <ligand>
        <name>substrate</name>
    </ligand>
</feature>
<feature type="binding site" evidence="1">
    <location>
        <position position="229"/>
    </location>
    <ligand>
        <name>Mg(2+)</name>
        <dbReference type="ChEBI" id="CHEBI:18420"/>
    </ligand>
</feature>
<feature type="binding site" evidence="1">
    <location>
        <position position="229"/>
    </location>
    <ligand>
        <name>substrate</name>
    </ligand>
</feature>
<feature type="binding site" evidence="1">
    <location>
        <position position="253"/>
    </location>
    <ligand>
        <name>Mg(2+)</name>
        <dbReference type="ChEBI" id="CHEBI:18420"/>
    </ligand>
</feature>
<feature type="binding site" evidence="1">
    <location>
        <position position="257"/>
    </location>
    <ligand>
        <name>Mg(2+)</name>
        <dbReference type="ChEBI" id="CHEBI:18420"/>
    </ligand>
</feature>
<feature type="binding site" evidence="1">
    <location>
        <begin position="292"/>
        <end position="304"/>
    </location>
    <ligand>
        <name>NAD(+)</name>
        <dbReference type="ChEBI" id="CHEBI:57540"/>
    </ligand>
</feature>
<feature type="site" description="Important for catalysis" evidence="1">
    <location>
        <position position="145"/>
    </location>
</feature>
<feature type="site" description="Important for catalysis" evidence="1">
    <location>
        <position position="196"/>
    </location>
</feature>
<gene>
    <name evidence="1" type="primary">leuB</name>
    <name type="ordered locus">SAR11_0250</name>
</gene>